<keyword id="KW-0067">ATP-binding</keyword>
<keyword id="KW-0143">Chaperone</keyword>
<keyword id="KW-0479">Metal-binding</keyword>
<keyword id="KW-0547">Nucleotide-binding</keyword>
<keyword id="KW-0862">Zinc</keyword>
<dbReference type="EMBL" id="CP000117">
    <property type="protein sequence ID" value="ABA23209.1"/>
    <property type="molecule type" value="Genomic_DNA"/>
</dbReference>
<dbReference type="SMR" id="Q3M727"/>
<dbReference type="STRING" id="240292.Ava_3603"/>
<dbReference type="KEGG" id="ava:Ava_3603"/>
<dbReference type="eggNOG" id="COG1219">
    <property type="taxonomic scope" value="Bacteria"/>
</dbReference>
<dbReference type="HOGENOM" id="CLU_014218_8_2_3"/>
<dbReference type="Proteomes" id="UP000002533">
    <property type="component" value="Chromosome"/>
</dbReference>
<dbReference type="GO" id="GO:0009376">
    <property type="term" value="C:HslUV protease complex"/>
    <property type="evidence" value="ECO:0007669"/>
    <property type="project" value="TreeGrafter"/>
</dbReference>
<dbReference type="GO" id="GO:0005524">
    <property type="term" value="F:ATP binding"/>
    <property type="evidence" value="ECO:0007669"/>
    <property type="project" value="UniProtKB-UniRule"/>
</dbReference>
<dbReference type="GO" id="GO:0016887">
    <property type="term" value="F:ATP hydrolysis activity"/>
    <property type="evidence" value="ECO:0007669"/>
    <property type="project" value="InterPro"/>
</dbReference>
<dbReference type="GO" id="GO:0140662">
    <property type="term" value="F:ATP-dependent protein folding chaperone"/>
    <property type="evidence" value="ECO:0007669"/>
    <property type="project" value="InterPro"/>
</dbReference>
<dbReference type="GO" id="GO:0046983">
    <property type="term" value="F:protein dimerization activity"/>
    <property type="evidence" value="ECO:0007669"/>
    <property type="project" value="InterPro"/>
</dbReference>
<dbReference type="GO" id="GO:0051082">
    <property type="term" value="F:unfolded protein binding"/>
    <property type="evidence" value="ECO:0007669"/>
    <property type="project" value="UniProtKB-UniRule"/>
</dbReference>
<dbReference type="GO" id="GO:0008270">
    <property type="term" value="F:zinc ion binding"/>
    <property type="evidence" value="ECO:0007669"/>
    <property type="project" value="InterPro"/>
</dbReference>
<dbReference type="GO" id="GO:0051301">
    <property type="term" value="P:cell division"/>
    <property type="evidence" value="ECO:0007669"/>
    <property type="project" value="TreeGrafter"/>
</dbReference>
<dbReference type="GO" id="GO:0051603">
    <property type="term" value="P:proteolysis involved in protein catabolic process"/>
    <property type="evidence" value="ECO:0007669"/>
    <property type="project" value="TreeGrafter"/>
</dbReference>
<dbReference type="CDD" id="cd19497">
    <property type="entry name" value="RecA-like_ClpX"/>
    <property type="match status" value="1"/>
</dbReference>
<dbReference type="FunFam" id="1.10.8.60:FF:000002">
    <property type="entry name" value="ATP-dependent Clp protease ATP-binding subunit ClpX"/>
    <property type="match status" value="1"/>
</dbReference>
<dbReference type="FunFam" id="3.40.50.300:FF:000005">
    <property type="entry name" value="ATP-dependent Clp protease ATP-binding subunit ClpX"/>
    <property type="match status" value="1"/>
</dbReference>
<dbReference type="Gene3D" id="1.10.8.60">
    <property type="match status" value="1"/>
</dbReference>
<dbReference type="Gene3D" id="6.20.220.10">
    <property type="entry name" value="ClpX chaperone, C4-type zinc finger domain"/>
    <property type="match status" value="1"/>
</dbReference>
<dbReference type="Gene3D" id="3.40.50.300">
    <property type="entry name" value="P-loop containing nucleotide triphosphate hydrolases"/>
    <property type="match status" value="1"/>
</dbReference>
<dbReference type="HAMAP" id="MF_00175">
    <property type="entry name" value="ClpX"/>
    <property type="match status" value="1"/>
</dbReference>
<dbReference type="InterPro" id="IPR003593">
    <property type="entry name" value="AAA+_ATPase"/>
</dbReference>
<dbReference type="InterPro" id="IPR050052">
    <property type="entry name" value="ATP-dep_Clp_protease_ClpX"/>
</dbReference>
<dbReference type="InterPro" id="IPR003959">
    <property type="entry name" value="ATPase_AAA_core"/>
</dbReference>
<dbReference type="InterPro" id="IPR019489">
    <property type="entry name" value="Clp_ATPase_C"/>
</dbReference>
<dbReference type="InterPro" id="IPR004487">
    <property type="entry name" value="Clp_protease_ATP-bd_su_ClpX"/>
</dbReference>
<dbReference type="InterPro" id="IPR046425">
    <property type="entry name" value="ClpX_bact"/>
</dbReference>
<dbReference type="InterPro" id="IPR027417">
    <property type="entry name" value="P-loop_NTPase"/>
</dbReference>
<dbReference type="InterPro" id="IPR010603">
    <property type="entry name" value="Znf_CppX_C4"/>
</dbReference>
<dbReference type="InterPro" id="IPR038366">
    <property type="entry name" value="Znf_CppX_C4_sf"/>
</dbReference>
<dbReference type="NCBIfam" id="TIGR00382">
    <property type="entry name" value="clpX"/>
    <property type="match status" value="1"/>
</dbReference>
<dbReference type="NCBIfam" id="NF003745">
    <property type="entry name" value="PRK05342.1"/>
    <property type="match status" value="1"/>
</dbReference>
<dbReference type="PANTHER" id="PTHR48102:SF7">
    <property type="entry name" value="ATP-DEPENDENT CLP PROTEASE ATP-BINDING SUBUNIT CLPX-LIKE, MITOCHONDRIAL"/>
    <property type="match status" value="1"/>
</dbReference>
<dbReference type="PANTHER" id="PTHR48102">
    <property type="entry name" value="ATP-DEPENDENT CLP PROTEASE ATP-BINDING SUBUNIT CLPX-LIKE, MITOCHONDRIAL-RELATED"/>
    <property type="match status" value="1"/>
</dbReference>
<dbReference type="Pfam" id="PF07724">
    <property type="entry name" value="AAA_2"/>
    <property type="match status" value="1"/>
</dbReference>
<dbReference type="Pfam" id="PF10431">
    <property type="entry name" value="ClpB_D2-small"/>
    <property type="match status" value="1"/>
</dbReference>
<dbReference type="Pfam" id="PF06689">
    <property type="entry name" value="zf-C4_ClpX"/>
    <property type="match status" value="1"/>
</dbReference>
<dbReference type="SMART" id="SM00382">
    <property type="entry name" value="AAA"/>
    <property type="match status" value="1"/>
</dbReference>
<dbReference type="SMART" id="SM01086">
    <property type="entry name" value="ClpB_D2-small"/>
    <property type="match status" value="1"/>
</dbReference>
<dbReference type="SMART" id="SM00994">
    <property type="entry name" value="zf-C4_ClpX"/>
    <property type="match status" value="1"/>
</dbReference>
<dbReference type="SUPFAM" id="SSF57716">
    <property type="entry name" value="Glucocorticoid receptor-like (DNA-binding domain)"/>
    <property type="match status" value="1"/>
</dbReference>
<dbReference type="SUPFAM" id="SSF52540">
    <property type="entry name" value="P-loop containing nucleoside triphosphate hydrolases"/>
    <property type="match status" value="1"/>
</dbReference>
<dbReference type="PROSITE" id="PS51902">
    <property type="entry name" value="CLPX_ZB"/>
    <property type="match status" value="1"/>
</dbReference>
<proteinExistence type="inferred from homology"/>
<protein>
    <recommendedName>
        <fullName evidence="1">ATP-dependent Clp protease ATP-binding subunit ClpX</fullName>
    </recommendedName>
</protein>
<feature type="chain" id="PRO_1000024512" description="ATP-dependent Clp protease ATP-binding subunit ClpX">
    <location>
        <begin position="1"/>
        <end position="446"/>
    </location>
</feature>
<feature type="domain" description="ClpX-type ZB" evidence="2">
    <location>
        <begin position="1"/>
        <end position="51"/>
    </location>
</feature>
<feature type="region of interest" description="Disordered" evidence="3">
    <location>
        <begin position="53"/>
        <end position="76"/>
    </location>
</feature>
<feature type="binding site" evidence="2">
    <location>
        <position position="10"/>
    </location>
    <ligand>
        <name>Zn(2+)</name>
        <dbReference type="ChEBI" id="CHEBI:29105"/>
    </ligand>
</feature>
<feature type="binding site" evidence="2">
    <location>
        <position position="13"/>
    </location>
    <ligand>
        <name>Zn(2+)</name>
        <dbReference type="ChEBI" id="CHEBI:29105"/>
    </ligand>
</feature>
<feature type="binding site" evidence="2">
    <location>
        <position position="32"/>
    </location>
    <ligand>
        <name>Zn(2+)</name>
        <dbReference type="ChEBI" id="CHEBI:29105"/>
    </ligand>
</feature>
<feature type="binding site" evidence="2">
    <location>
        <position position="35"/>
    </location>
    <ligand>
        <name>Zn(2+)</name>
        <dbReference type="ChEBI" id="CHEBI:29105"/>
    </ligand>
</feature>
<feature type="binding site" evidence="1">
    <location>
        <begin position="143"/>
        <end position="150"/>
    </location>
    <ligand>
        <name>ATP</name>
        <dbReference type="ChEBI" id="CHEBI:30616"/>
    </ligand>
</feature>
<comment type="function">
    <text evidence="1">ATP-dependent specificity component of the Clp protease. It directs the protease to specific substrates. Can perform chaperone functions in the absence of ClpP.</text>
</comment>
<comment type="subunit">
    <text evidence="1">Component of the ClpX-ClpP complex. Forms a hexameric ring that, in the presence of ATP, binds to fourteen ClpP subunits assembled into a disk-like structure with a central cavity, resembling the structure of eukaryotic proteasomes.</text>
</comment>
<comment type="similarity">
    <text evidence="1">Belongs to the ClpX chaperone family.</text>
</comment>
<sequence length="446" mass="49055">MSKYDSHLKCSFCGKSQEQVRKLIAGPGVYICDECVDLCNEILDEELLDTSGAAAQPAPKSEPPQKRRARSSNLSLSQIPKPREIKKYLDEHVIGQDEAKKVLSVAVYNHYKRLAILQSKGSSKNGADDAVELQKSNILLIGPTGCGKTLLAQTLAKILDVPFAVADATTLTEAGYVGEDVENILLRLLQVADLDVEEAQRGIIYIDEIDKIARKSENPSITRDVSGEGVQQALLKMLEGTIANVPPQGGRKHPYQDCIQIDTSNILFICGGAFVGLEKVVDQRGGKKSIGFVQPGEGQSKEKRAADVLRHLEPDDLVKFGMIPEFIGRVPMVAVVDPLDEEALMAILTQPRSALVKQYQKLLKMDNVQLDFKPDALKAIAQEAYRRKTGARALRGIVEELMLDVMYELPSRKDVTRCTVTREMVEKRSTAELLVHPSSLPKPESA</sequence>
<gene>
    <name evidence="1" type="primary">clpX</name>
    <name type="ordered locus">Ava_3603</name>
</gene>
<accession>Q3M727</accession>
<name>CLPX_TRIV2</name>
<organism>
    <name type="scientific">Trichormus variabilis (strain ATCC 29413 / PCC 7937)</name>
    <name type="common">Anabaena variabilis</name>
    <dbReference type="NCBI Taxonomy" id="240292"/>
    <lineage>
        <taxon>Bacteria</taxon>
        <taxon>Bacillati</taxon>
        <taxon>Cyanobacteriota</taxon>
        <taxon>Cyanophyceae</taxon>
        <taxon>Nostocales</taxon>
        <taxon>Nostocaceae</taxon>
        <taxon>Trichormus</taxon>
    </lineage>
</organism>
<evidence type="ECO:0000255" key="1">
    <source>
        <dbReference type="HAMAP-Rule" id="MF_00175"/>
    </source>
</evidence>
<evidence type="ECO:0000255" key="2">
    <source>
        <dbReference type="PROSITE-ProRule" id="PRU01250"/>
    </source>
</evidence>
<evidence type="ECO:0000256" key="3">
    <source>
        <dbReference type="SAM" id="MobiDB-lite"/>
    </source>
</evidence>
<reference key="1">
    <citation type="journal article" date="2014" name="Stand. Genomic Sci.">
        <title>Complete genome sequence of Anabaena variabilis ATCC 29413.</title>
        <authorList>
            <person name="Thiel T."/>
            <person name="Pratte B.S."/>
            <person name="Zhong J."/>
            <person name="Goodwin L."/>
            <person name="Copeland A."/>
            <person name="Lucas S."/>
            <person name="Han C."/>
            <person name="Pitluck S."/>
            <person name="Land M.L."/>
            <person name="Kyrpides N.C."/>
            <person name="Woyke T."/>
        </authorList>
    </citation>
    <scope>NUCLEOTIDE SEQUENCE [LARGE SCALE GENOMIC DNA]</scope>
    <source>
        <strain>ATCC 29413 / PCC 7937</strain>
    </source>
</reference>